<evidence type="ECO:0000250" key="1"/>
<evidence type="ECO:0000255" key="2">
    <source>
        <dbReference type="PROSITE-ProRule" id="PRU00691"/>
    </source>
</evidence>
<evidence type="ECO:0000305" key="3"/>
<gene>
    <name type="primary">TRX7</name>
    <name type="ordered locus">At1g59730</name>
    <name type="ORF">F23H11.5</name>
</gene>
<dbReference type="EMBL" id="AC007258">
    <property type="protein sequence ID" value="AAD39316.1"/>
    <property type="molecule type" value="Genomic_DNA"/>
</dbReference>
<dbReference type="EMBL" id="CP002684">
    <property type="protein sequence ID" value="AEE33610.1"/>
    <property type="molecule type" value="Genomic_DNA"/>
</dbReference>
<dbReference type="EMBL" id="AK228099">
    <property type="protein sequence ID" value="BAF00058.1"/>
    <property type="molecule type" value="mRNA"/>
</dbReference>
<dbReference type="EMBL" id="BT003140">
    <property type="protein sequence ID" value="AAO24572.1"/>
    <property type="molecule type" value="mRNA"/>
</dbReference>
<dbReference type="PIR" id="B96621">
    <property type="entry name" value="B96621"/>
</dbReference>
<dbReference type="RefSeq" id="NP_176182.1">
    <property type="nucleotide sequence ID" value="NM_104666.4"/>
</dbReference>
<dbReference type="SMR" id="Q9XIF4"/>
<dbReference type="BioGRID" id="27491">
    <property type="interactions" value="97"/>
</dbReference>
<dbReference type="FunCoup" id="Q9XIF4">
    <property type="interactions" value="226"/>
</dbReference>
<dbReference type="IntAct" id="Q9XIF4">
    <property type="interactions" value="97"/>
</dbReference>
<dbReference type="STRING" id="3702.Q9XIF4"/>
<dbReference type="PaxDb" id="3702-AT1G59730.1"/>
<dbReference type="ProteomicsDB" id="232472"/>
<dbReference type="EnsemblPlants" id="AT1G59730.1">
    <property type="protein sequence ID" value="AT1G59730.1"/>
    <property type="gene ID" value="AT1G59730"/>
</dbReference>
<dbReference type="GeneID" id="842266"/>
<dbReference type="Gramene" id="AT1G59730.1">
    <property type="protein sequence ID" value="AT1G59730.1"/>
    <property type="gene ID" value="AT1G59730"/>
</dbReference>
<dbReference type="KEGG" id="ath:AT1G59730"/>
<dbReference type="Araport" id="AT1G59730"/>
<dbReference type="TAIR" id="AT1G59730">
    <property type="gene designation" value="TH7"/>
</dbReference>
<dbReference type="eggNOG" id="KOG0907">
    <property type="taxonomic scope" value="Eukaryota"/>
</dbReference>
<dbReference type="HOGENOM" id="CLU_090389_14_1_1"/>
<dbReference type="InParanoid" id="Q9XIF4"/>
<dbReference type="OMA" id="KSQWRAQ"/>
<dbReference type="OrthoDB" id="10263751at2759"/>
<dbReference type="PhylomeDB" id="Q9XIF4"/>
<dbReference type="PRO" id="PR:Q9XIF4"/>
<dbReference type="Proteomes" id="UP000006548">
    <property type="component" value="Chromosome 1"/>
</dbReference>
<dbReference type="ExpressionAtlas" id="Q9XIF4">
    <property type="expression patterns" value="baseline and differential"/>
</dbReference>
<dbReference type="GO" id="GO:0005829">
    <property type="term" value="C:cytosol"/>
    <property type="evidence" value="ECO:0000314"/>
    <property type="project" value="TAIR"/>
</dbReference>
<dbReference type="GO" id="GO:0005783">
    <property type="term" value="C:endoplasmic reticulum"/>
    <property type="evidence" value="ECO:0000314"/>
    <property type="project" value="TAIR"/>
</dbReference>
<dbReference type="CDD" id="cd02947">
    <property type="entry name" value="TRX_family"/>
    <property type="match status" value="1"/>
</dbReference>
<dbReference type="Gene3D" id="3.40.30.10">
    <property type="entry name" value="Glutaredoxin"/>
    <property type="match status" value="1"/>
</dbReference>
<dbReference type="InterPro" id="IPR036249">
    <property type="entry name" value="Thioredoxin-like_sf"/>
</dbReference>
<dbReference type="InterPro" id="IPR017937">
    <property type="entry name" value="Thioredoxin_CS"/>
</dbReference>
<dbReference type="InterPro" id="IPR013766">
    <property type="entry name" value="Thioredoxin_domain"/>
</dbReference>
<dbReference type="InterPro" id="IPR050620">
    <property type="entry name" value="Thioredoxin_H-type-like"/>
</dbReference>
<dbReference type="PANTHER" id="PTHR10438">
    <property type="entry name" value="THIOREDOXIN"/>
    <property type="match status" value="1"/>
</dbReference>
<dbReference type="PANTHER" id="PTHR10438:SF448">
    <property type="entry name" value="THIOREDOXIN H7"/>
    <property type="match status" value="1"/>
</dbReference>
<dbReference type="Pfam" id="PF00085">
    <property type="entry name" value="Thioredoxin"/>
    <property type="match status" value="1"/>
</dbReference>
<dbReference type="SUPFAM" id="SSF52833">
    <property type="entry name" value="Thioredoxin-like"/>
    <property type="match status" value="1"/>
</dbReference>
<dbReference type="PROSITE" id="PS00194">
    <property type="entry name" value="THIOREDOXIN_1"/>
    <property type="match status" value="1"/>
</dbReference>
<dbReference type="PROSITE" id="PS51352">
    <property type="entry name" value="THIOREDOXIN_2"/>
    <property type="match status" value="1"/>
</dbReference>
<feature type="chain" id="PRO_0000394534" description="Thioredoxin H7">
    <location>
        <begin position="1"/>
        <end position="129"/>
    </location>
</feature>
<feature type="domain" description="Thioredoxin" evidence="2">
    <location>
        <begin position="6"/>
        <end position="129"/>
    </location>
</feature>
<feature type="active site" description="Nucleophile" evidence="1">
    <location>
        <position position="55"/>
    </location>
</feature>
<feature type="active site" description="Nucleophile" evidence="1">
    <location>
        <position position="58"/>
    </location>
</feature>
<feature type="site" description="Deprotonates C-terminal active site Cys" evidence="1">
    <location>
        <position position="49"/>
    </location>
</feature>
<feature type="site" description="Contributes to redox potential value" evidence="1">
    <location>
        <position position="56"/>
    </location>
</feature>
<feature type="site" description="Contributes to redox potential value" evidence="1">
    <location>
        <position position="57"/>
    </location>
</feature>
<feature type="disulfide bond" description="Redox-active" evidence="2">
    <location>
        <begin position="55"/>
        <end position="58"/>
    </location>
</feature>
<protein>
    <recommendedName>
        <fullName>Thioredoxin H7</fullName>
        <shortName>AtTrxh7</shortName>
    </recommendedName>
</protein>
<sequence>MGSNVSSVHDVHSSMEITSNGFVVEIESRRQWKSLFDSMKGSNKLLVIDFTAVWCGPCKAMEPRVREIASKYSEAVFARVDVDRLMDVAGTYRAITLPAFVFVKRGEEIDRVVGAKPDELVKKIEQHRV</sequence>
<reference key="1">
    <citation type="journal article" date="2000" name="Nature">
        <title>Sequence and analysis of chromosome 1 of the plant Arabidopsis thaliana.</title>
        <authorList>
            <person name="Theologis A."/>
            <person name="Ecker J.R."/>
            <person name="Palm C.J."/>
            <person name="Federspiel N.A."/>
            <person name="Kaul S."/>
            <person name="White O."/>
            <person name="Alonso J."/>
            <person name="Altafi H."/>
            <person name="Araujo R."/>
            <person name="Bowman C.L."/>
            <person name="Brooks S.Y."/>
            <person name="Buehler E."/>
            <person name="Chan A."/>
            <person name="Chao Q."/>
            <person name="Chen H."/>
            <person name="Cheuk R.F."/>
            <person name="Chin C.W."/>
            <person name="Chung M.K."/>
            <person name="Conn L."/>
            <person name="Conway A.B."/>
            <person name="Conway A.R."/>
            <person name="Creasy T.H."/>
            <person name="Dewar K."/>
            <person name="Dunn P."/>
            <person name="Etgu P."/>
            <person name="Feldblyum T.V."/>
            <person name="Feng J.-D."/>
            <person name="Fong B."/>
            <person name="Fujii C.Y."/>
            <person name="Gill J.E."/>
            <person name="Goldsmith A.D."/>
            <person name="Haas B."/>
            <person name="Hansen N.F."/>
            <person name="Hughes B."/>
            <person name="Huizar L."/>
            <person name="Hunter J.L."/>
            <person name="Jenkins J."/>
            <person name="Johnson-Hopson C."/>
            <person name="Khan S."/>
            <person name="Khaykin E."/>
            <person name="Kim C.J."/>
            <person name="Koo H.L."/>
            <person name="Kremenetskaia I."/>
            <person name="Kurtz D.B."/>
            <person name="Kwan A."/>
            <person name="Lam B."/>
            <person name="Langin-Hooper S."/>
            <person name="Lee A."/>
            <person name="Lee J.M."/>
            <person name="Lenz C.A."/>
            <person name="Li J.H."/>
            <person name="Li Y.-P."/>
            <person name="Lin X."/>
            <person name="Liu S.X."/>
            <person name="Liu Z.A."/>
            <person name="Luros J.S."/>
            <person name="Maiti R."/>
            <person name="Marziali A."/>
            <person name="Militscher J."/>
            <person name="Miranda M."/>
            <person name="Nguyen M."/>
            <person name="Nierman W.C."/>
            <person name="Osborne B.I."/>
            <person name="Pai G."/>
            <person name="Peterson J."/>
            <person name="Pham P.K."/>
            <person name="Rizzo M."/>
            <person name="Rooney T."/>
            <person name="Rowley D."/>
            <person name="Sakano H."/>
            <person name="Salzberg S.L."/>
            <person name="Schwartz J.R."/>
            <person name="Shinn P."/>
            <person name="Southwick A.M."/>
            <person name="Sun H."/>
            <person name="Tallon L.J."/>
            <person name="Tambunga G."/>
            <person name="Toriumi M.J."/>
            <person name="Town C.D."/>
            <person name="Utterback T."/>
            <person name="Van Aken S."/>
            <person name="Vaysberg M."/>
            <person name="Vysotskaia V.S."/>
            <person name="Walker M."/>
            <person name="Wu D."/>
            <person name="Yu G."/>
            <person name="Fraser C.M."/>
            <person name="Venter J.C."/>
            <person name="Davis R.W."/>
        </authorList>
    </citation>
    <scope>NUCLEOTIDE SEQUENCE [LARGE SCALE GENOMIC DNA]</scope>
    <source>
        <strain>cv. Columbia</strain>
    </source>
</reference>
<reference key="2">
    <citation type="journal article" date="2017" name="Plant J.">
        <title>Araport11: a complete reannotation of the Arabidopsis thaliana reference genome.</title>
        <authorList>
            <person name="Cheng C.Y."/>
            <person name="Krishnakumar V."/>
            <person name="Chan A.P."/>
            <person name="Thibaud-Nissen F."/>
            <person name="Schobel S."/>
            <person name="Town C.D."/>
        </authorList>
    </citation>
    <scope>GENOME REANNOTATION</scope>
    <source>
        <strain>cv. Columbia</strain>
    </source>
</reference>
<reference key="3">
    <citation type="journal article" date="2003" name="Science">
        <title>Empirical analysis of transcriptional activity in the Arabidopsis genome.</title>
        <authorList>
            <person name="Yamada K."/>
            <person name="Lim J."/>
            <person name="Dale J.M."/>
            <person name="Chen H."/>
            <person name="Shinn P."/>
            <person name="Palm C.J."/>
            <person name="Southwick A.M."/>
            <person name="Wu H.C."/>
            <person name="Kim C.J."/>
            <person name="Nguyen M."/>
            <person name="Pham P.K."/>
            <person name="Cheuk R.F."/>
            <person name="Karlin-Newmann G."/>
            <person name="Liu S.X."/>
            <person name="Lam B."/>
            <person name="Sakano H."/>
            <person name="Wu T."/>
            <person name="Yu G."/>
            <person name="Miranda M."/>
            <person name="Quach H.L."/>
            <person name="Tripp M."/>
            <person name="Chang C.H."/>
            <person name="Lee J.M."/>
            <person name="Toriumi M.J."/>
            <person name="Chan M.M."/>
            <person name="Tang C.C."/>
            <person name="Onodera C.S."/>
            <person name="Deng J.M."/>
            <person name="Akiyama K."/>
            <person name="Ansari Y."/>
            <person name="Arakawa T."/>
            <person name="Banh J."/>
            <person name="Banno F."/>
            <person name="Bowser L."/>
            <person name="Brooks S.Y."/>
            <person name="Carninci P."/>
            <person name="Chao Q."/>
            <person name="Choy N."/>
            <person name="Enju A."/>
            <person name="Goldsmith A.D."/>
            <person name="Gurjal M."/>
            <person name="Hansen N.F."/>
            <person name="Hayashizaki Y."/>
            <person name="Johnson-Hopson C."/>
            <person name="Hsuan V.W."/>
            <person name="Iida K."/>
            <person name="Karnes M."/>
            <person name="Khan S."/>
            <person name="Koesema E."/>
            <person name="Ishida J."/>
            <person name="Jiang P.X."/>
            <person name="Jones T."/>
            <person name="Kawai J."/>
            <person name="Kamiya A."/>
            <person name="Meyers C."/>
            <person name="Nakajima M."/>
            <person name="Narusaka M."/>
            <person name="Seki M."/>
            <person name="Sakurai T."/>
            <person name="Satou M."/>
            <person name="Tamse R."/>
            <person name="Vaysberg M."/>
            <person name="Wallender E.K."/>
            <person name="Wong C."/>
            <person name="Yamamura Y."/>
            <person name="Yuan S."/>
            <person name="Shinozaki K."/>
            <person name="Davis R.W."/>
            <person name="Theologis A."/>
            <person name="Ecker J.R."/>
        </authorList>
    </citation>
    <scope>NUCLEOTIDE SEQUENCE [LARGE SCALE MRNA]</scope>
    <source>
        <strain>cv. Columbia</strain>
    </source>
</reference>
<reference key="4">
    <citation type="submission" date="2006-07" db="EMBL/GenBank/DDBJ databases">
        <title>Large-scale analysis of RIKEN Arabidopsis full-length (RAFL) cDNAs.</title>
        <authorList>
            <person name="Totoki Y."/>
            <person name="Seki M."/>
            <person name="Ishida J."/>
            <person name="Nakajima M."/>
            <person name="Enju A."/>
            <person name="Kamiya A."/>
            <person name="Narusaka M."/>
            <person name="Shin-i T."/>
            <person name="Nakagawa M."/>
            <person name="Sakamoto N."/>
            <person name="Oishi K."/>
            <person name="Kohara Y."/>
            <person name="Kobayashi M."/>
            <person name="Toyoda A."/>
            <person name="Sakaki Y."/>
            <person name="Sakurai T."/>
            <person name="Iida K."/>
            <person name="Akiyama K."/>
            <person name="Satou M."/>
            <person name="Toyoda T."/>
            <person name="Konagaya A."/>
            <person name="Carninci P."/>
            <person name="Kawai J."/>
            <person name="Hayashizaki Y."/>
            <person name="Shinozaki K."/>
        </authorList>
    </citation>
    <scope>NUCLEOTIDE SEQUENCE [LARGE SCALE MRNA]</scope>
    <source>
        <strain>cv. Columbia</strain>
    </source>
</reference>
<reference key="5">
    <citation type="journal article" date="2009" name="Mol. Plant">
        <title>Comparative genomic study of the thioredoxin family in photosynthetic organisms with emphasis on Populus trichocarpa.</title>
        <authorList>
            <person name="Chibani K."/>
            <person name="Wingsle G."/>
            <person name="Jacquot J.P."/>
            <person name="Gelhaye E."/>
            <person name="Rouhier N."/>
        </authorList>
    </citation>
    <scope>GENE FAMILY</scope>
    <scope>NOMENCLATURE</scope>
</reference>
<proteinExistence type="evidence at transcript level"/>
<organism>
    <name type="scientific">Arabidopsis thaliana</name>
    <name type="common">Mouse-ear cress</name>
    <dbReference type="NCBI Taxonomy" id="3702"/>
    <lineage>
        <taxon>Eukaryota</taxon>
        <taxon>Viridiplantae</taxon>
        <taxon>Streptophyta</taxon>
        <taxon>Embryophyta</taxon>
        <taxon>Tracheophyta</taxon>
        <taxon>Spermatophyta</taxon>
        <taxon>Magnoliopsida</taxon>
        <taxon>eudicotyledons</taxon>
        <taxon>Gunneridae</taxon>
        <taxon>Pentapetalae</taxon>
        <taxon>rosids</taxon>
        <taxon>malvids</taxon>
        <taxon>Brassicales</taxon>
        <taxon>Brassicaceae</taxon>
        <taxon>Camelineae</taxon>
        <taxon>Arabidopsis</taxon>
    </lineage>
</organism>
<accession>Q9XIF4</accession>
<name>TRXH7_ARATH</name>
<comment type="function">
    <text>Probable thiol-disulfide oxidoreductase that may be involved in the redox regulation of a number of cytosolic enzymes.</text>
</comment>
<comment type="subcellular location">
    <subcellularLocation>
        <location evidence="1">Cytoplasm</location>
    </subcellularLocation>
</comment>
<comment type="similarity">
    <text evidence="3">Belongs to the thioredoxin family. Plant H-type subfamily.</text>
</comment>
<keyword id="KW-0963">Cytoplasm</keyword>
<keyword id="KW-1015">Disulfide bond</keyword>
<keyword id="KW-0249">Electron transport</keyword>
<keyword id="KW-0676">Redox-active center</keyword>
<keyword id="KW-1185">Reference proteome</keyword>
<keyword id="KW-0813">Transport</keyword>